<proteinExistence type="evidence at protein level"/>
<reference key="1">
    <citation type="journal article" date="1998" name="Biochem. J.">
        <title>Cobalamin (vitamin B12) biosynthesis: identification and characterization of a Bacillus megaterium cobI operon.</title>
        <authorList>
            <person name="Raux E."/>
            <person name="Lanois A."/>
            <person name="Warren M.J."/>
            <person name="Rambach A."/>
            <person name="Thermes C."/>
        </authorList>
    </citation>
    <scope>NUCLEOTIDE SEQUENCE [GENOMIC DNA]</scope>
    <source>
        <strain>DSM 509 / CCM 1464 / NBRC 12109</strain>
    </source>
</reference>
<reference key="2">
    <citation type="journal article" date="2013" name="Proc. Natl. Acad. Sci. U.S.A.">
        <title>Elucidation of the anaerobic pathway for the corrin component of cobalamin (vitamin B12).</title>
        <authorList>
            <person name="Moore S.J."/>
            <person name="Lawrence A.D."/>
            <person name="Biedendieck R."/>
            <person name="Deery E."/>
            <person name="Frank S."/>
            <person name="Howard M.J."/>
            <person name="Rigby S.E."/>
            <person name="Warren M.J."/>
        </authorList>
    </citation>
    <scope>FUNCTION</scope>
    <scope>CATALYTIC ACTIVITY</scope>
</reference>
<organism>
    <name type="scientific">Priestia megaterium</name>
    <name type="common">Bacillus megaterium</name>
    <dbReference type="NCBI Taxonomy" id="1404"/>
    <lineage>
        <taxon>Bacteria</taxon>
        <taxon>Bacillati</taxon>
        <taxon>Bacillota</taxon>
        <taxon>Bacilli</taxon>
        <taxon>Bacillales</taxon>
        <taxon>Bacillaceae</taxon>
        <taxon>Priestia</taxon>
    </lineage>
</organism>
<keyword id="KW-0169">Cobalamin biosynthesis</keyword>
<keyword id="KW-0520">NAD</keyword>
<keyword id="KW-0560">Oxidoreductase</keyword>
<dbReference type="EC" id="1.3.1.106"/>
<dbReference type="EMBL" id="AJ000758">
    <property type="protein sequence ID" value="CAA04309.1"/>
    <property type="molecule type" value="Genomic_DNA"/>
</dbReference>
<dbReference type="PIR" id="T44685">
    <property type="entry name" value="T44685"/>
</dbReference>
<dbReference type="RefSeq" id="WP_116071876.1">
    <property type="nucleotide sequence ID" value="NZ_JAROZX010000013.1"/>
</dbReference>
<dbReference type="SMR" id="O87691"/>
<dbReference type="BioCyc" id="MetaCyc:MONOMER-18418"/>
<dbReference type="UniPathway" id="UPA00148">
    <property type="reaction ID" value="UER00228"/>
</dbReference>
<dbReference type="GO" id="GO:0016994">
    <property type="term" value="F:precorrin-6A reductase activity"/>
    <property type="evidence" value="ECO:0007669"/>
    <property type="project" value="InterPro"/>
</dbReference>
<dbReference type="GO" id="GO:0009236">
    <property type="term" value="P:cobalamin biosynthetic process"/>
    <property type="evidence" value="ECO:0007669"/>
    <property type="project" value="UniProtKB-UniPathway"/>
</dbReference>
<dbReference type="InterPro" id="IPR003723">
    <property type="entry name" value="Precorrin-6x_reduct"/>
</dbReference>
<dbReference type="NCBIfam" id="TIGR00715">
    <property type="entry name" value="precor6x_red"/>
    <property type="match status" value="1"/>
</dbReference>
<dbReference type="PANTHER" id="PTHR36925">
    <property type="entry name" value="COBALT-PRECORRIN-6A REDUCTASE"/>
    <property type="match status" value="1"/>
</dbReference>
<dbReference type="PANTHER" id="PTHR36925:SF1">
    <property type="entry name" value="COBALT-PRECORRIN-6A REDUCTASE"/>
    <property type="match status" value="1"/>
</dbReference>
<dbReference type="Pfam" id="PF02571">
    <property type="entry name" value="CbiJ"/>
    <property type="match status" value="1"/>
</dbReference>
<dbReference type="PROSITE" id="PS51014">
    <property type="entry name" value="COBK_CBIJ"/>
    <property type="match status" value="1"/>
</dbReference>
<name>CBIJ_PRIMG</name>
<sequence>MILLLAGTSDARALAVQVKKAGYDVTATVVTDNAAIELQRAEVKVKIGRLTKEDMTDFINEHGVKAIVDASHPFAEEASKNAIGAAAETAIPYIRYERASQAFTYDNMTMVSTYEEAAEVAAEKKGVIMLTTGSKTLQVFTEKLLPLSDVRLVARMLPRLDNMEKCQQLGLPQKNIIAIQGPFTKEFDRALYKQYGVTVMVTKESGKVGSVDKKVEAAKELGLDIIMIGRPKIEYGTVYSTFEEVVHALVNQTRS</sequence>
<comment type="function">
    <text evidence="2">Catalyzes the reduction of the macrocycle of cobalt-precorrin-6A to cobalt-precorrin-6B.</text>
</comment>
<comment type="catalytic activity">
    <reaction evidence="2">
        <text>Co-precorrin-6B + NAD(+) = Co-precorrin-6A + NADH + H(+)</text>
        <dbReference type="Rhea" id="RHEA:15625"/>
        <dbReference type="ChEBI" id="CHEBI:15378"/>
        <dbReference type="ChEBI" id="CHEBI:57540"/>
        <dbReference type="ChEBI" id="CHEBI:57945"/>
        <dbReference type="ChEBI" id="CHEBI:60064"/>
        <dbReference type="ChEBI" id="CHEBI:72780"/>
        <dbReference type="EC" id="1.3.1.106"/>
    </reaction>
</comment>
<comment type="pathway">
    <text>Cofactor biosynthesis; adenosylcobalamin biosynthesis; cob(II)yrinate a,c-diamide from sirohydrochlorin (anaerobic route): step 7/10.</text>
</comment>
<comment type="similarity">
    <text evidence="1">Belongs to the precorrin-6x reductase family.</text>
</comment>
<gene>
    <name type="primary">cbiJ</name>
</gene>
<evidence type="ECO:0000255" key="1">
    <source>
        <dbReference type="PROSITE-ProRule" id="PRU00356"/>
    </source>
</evidence>
<evidence type="ECO:0000269" key="2">
    <source>
    </source>
</evidence>
<protein>
    <recommendedName>
        <fullName>Cobalt-precorrin-6A reductase</fullName>
        <ecNumber>1.3.1.106</ecNumber>
    </recommendedName>
</protein>
<feature type="chain" id="PRO_0000429642" description="Cobalt-precorrin-6A reductase">
    <location>
        <begin position="1"/>
        <end position="255"/>
    </location>
</feature>
<accession>O87691</accession>